<accession>Q61091</accession>
<accession>A2RTK9</accession>
<evidence type="ECO:0000250" key="1"/>
<evidence type="ECO:0000250" key="2">
    <source>
        <dbReference type="UniProtKB" id="Q9H461"/>
    </source>
</evidence>
<evidence type="ECO:0000255" key="3"/>
<evidence type="ECO:0000255" key="4">
    <source>
        <dbReference type="PROSITE-ProRule" id="PRU00090"/>
    </source>
</evidence>
<evidence type="ECO:0000256" key="5">
    <source>
        <dbReference type="SAM" id="MobiDB-lite"/>
    </source>
</evidence>
<evidence type="ECO:0000269" key="6">
    <source>
    </source>
</evidence>
<evidence type="ECO:0000269" key="7">
    <source>
    </source>
</evidence>
<evidence type="ECO:0000269" key="8">
    <source>
    </source>
</evidence>
<evidence type="ECO:0000269" key="9">
    <source>
    </source>
</evidence>
<evidence type="ECO:0000269" key="10">
    <source>
    </source>
</evidence>
<evidence type="ECO:0000269" key="11">
    <source>
    </source>
</evidence>
<evidence type="ECO:0000269" key="12">
    <source>
    </source>
</evidence>
<evidence type="ECO:0000305" key="13"/>
<evidence type="ECO:0007829" key="14">
    <source>
        <dbReference type="PDB" id="1IJY"/>
    </source>
</evidence>
<evidence type="ECO:0007829" key="15">
    <source>
        <dbReference type="PDB" id="4F0A"/>
    </source>
</evidence>
<evidence type="ECO:0007829" key="16">
    <source>
        <dbReference type="PDB" id="6TFB"/>
    </source>
</evidence>
<name>FZD8_MOUSE</name>
<reference key="1">
    <citation type="journal article" date="1996" name="J. Biol. Chem.">
        <title>A large family of putative transmembrane receptors homologous to the product of the Drosophila tissue polarity gene frizzled.</title>
        <authorList>
            <person name="Wang Y."/>
            <person name="Macke J.P."/>
            <person name="Abella B.S."/>
            <person name="Andreasson K."/>
            <person name="Worley P."/>
            <person name="Gilbert D.J."/>
            <person name="Copeland N.G."/>
            <person name="Jenkins N.A."/>
            <person name="Nathans J."/>
        </authorList>
    </citation>
    <scope>NUCLEOTIDE SEQUENCE [GENOMIC DNA]</scope>
</reference>
<reference key="2">
    <citation type="submission" date="2005-09" db="EMBL/GenBank/DDBJ databases">
        <authorList>
            <person name="Mural R.J."/>
            <person name="Adams M.D."/>
            <person name="Myers E.W."/>
            <person name="Smith H.O."/>
            <person name="Venter J.C."/>
        </authorList>
    </citation>
    <scope>NUCLEOTIDE SEQUENCE [LARGE SCALE GENOMIC DNA]</scope>
</reference>
<reference key="3">
    <citation type="journal article" date="2004" name="Genome Res.">
        <title>The status, quality, and expansion of the NIH full-length cDNA project: the Mammalian Gene Collection (MGC).</title>
        <authorList>
            <consortium name="The MGC Project Team"/>
        </authorList>
    </citation>
    <scope>NUCLEOTIDE SEQUENCE [LARGE SCALE MRNA]</scope>
    <source>
        <tissue>Brain</tissue>
    </source>
</reference>
<reference key="4">
    <citation type="journal article" date="1999" name="Curr. Biol.">
        <title>Protein kinase C is differentially stimulated by Wnt and Frizzled homologs in a G-protein-dependent manner.</title>
        <authorList>
            <person name="Sheldahl L.C."/>
            <person name="Park M."/>
            <person name="Malbon C.C."/>
            <person name="Moon R.T."/>
        </authorList>
    </citation>
    <scope>FUNCTION IN BETA-CATENIN SIGNALING</scope>
</reference>
<reference key="5">
    <citation type="journal article" date="1999" name="Proc. Natl. Acad. Sci. U.S.A.">
        <title>Biochemical characterization of Wnt-frizzled interactions using a soluble, biologically active vertebrate Wnt protein.</title>
        <authorList>
            <person name="Hsieh J.C."/>
            <person name="Rattner A."/>
            <person name="Smallwood P.M."/>
            <person name="Nathans J."/>
        </authorList>
    </citation>
    <scope>FUNCTION</scope>
    <scope>SUBCELLULAR LOCATION</scope>
</reference>
<reference key="6">
    <citation type="journal article" date="2001" name="Biochem. Biophys. Res. Commun.">
        <title>Identification of a PDZ domain containing Golgi protein, GOPC, as an interaction partner of frizzled.</title>
        <authorList>
            <person name="Yao R."/>
            <person name="Maeda T."/>
            <person name="Takada S."/>
            <person name="Noda T."/>
        </authorList>
    </citation>
    <scope>INTERACTION WITH GOPC</scope>
    <scope>SUBCELLULAR LOCATION</scope>
    <scope>MUTAGENESIS OF VAL-685</scope>
</reference>
<reference key="7">
    <citation type="journal article" date="2004" name="Cell">
        <title>Mammalian Ryk is a Wnt coreceptor required for stimulation of neurite outgrowth.</title>
        <authorList>
            <person name="Lu W."/>
            <person name="Yamamoto V."/>
            <person name="Ortega B."/>
            <person name="Baltimore D."/>
        </authorList>
    </citation>
    <scope>FUNCTION</scope>
</reference>
<reference key="8">
    <citation type="journal article" date="2006" name="J. Biol. Chem.">
        <title>Mouse cristin/R-spondin family proteins are novel ligands for the Frizzled 8 and LRP6 receptors and activate beta-catenin-dependent gene expression.</title>
        <authorList>
            <person name="Nam J.-S."/>
            <person name="Turcotte T.J."/>
            <person name="Smith P.F."/>
            <person name="Choi S."/>
            <person name="Yoon J.K."/>
        </authorList>
    </citation>
    <scope>INTERACTION WITH RSPO1 AND RSPO3</scope>
    <scope>FUNCTION</scope>
</reference>
<reference key="9">
    <citation type="journal article" date="2001" name="Nature">
        <title>Insights into Wnt binding and signalling from the structures of two Frizzled cysteine-rich domains.</title>
        <authorList>
            <person name="Dann C.E."/>
            <person name="Hsieh J.-C."/>
            <person name="Rattner A."/>
            <person name="Sharma D."/>
            <person name="Nathans J."/>
            <person name="Leahy D.J."/>
        </authorList>
    </citation>
    <scope>X-RAY CRYSTALLOGRAPHY (1.9 ANGSTROMS) OF 28-155</scope>
    <scope>DISULFIDE BONDS</scope>
</reference>
<reference key="10">
    <citation type="journal article" date="2012" name="Science">
        <title>Structural basis of Wnt recognition by Frizzled.</title>
        <authorList>
            <person name="Janda C.Y."/>
            <person name="Waghray D."/>
            <person name="Levin A.M."/>
            <person name="Thomas C."/>
            <person name="Garcia K.C."/>
        </authorList>
    </citation>
    <scope>X-RAY CRYSTALLOGRAPHY (3.25 ANGSTROMS) OF 28-150 IN COMPLEX WITH XENOPUS WNT8</scope>
</reference>
<dbReference type="EMBL" id="U43321">
    <property type="protein sequence ID" value="AAC52433.1"/>
    <property type="molecule type" value="Genomic_DNA"/>
</dbReference>
<dbReference type="EMBL" id="CH466592">
    <property type="protein sequence ID" value="EDL23012.1"/>
    <property type="molecule type" value="Genomic_DNA"/>
</dbReference>
<dbReference type="EMBL" id="BC132543">
    <property type="protein sequence ID" value="AAI32544.1"/>
    <property type="molecule type" value="mRNA"/>
</dbReference>
<dbReference type="EMBL" id="BC138062">
    <property type="protein sequence ID" value="AAI38063.1"/>
    <property type="molecule type" value="mRNA"/>
</dbReference>
<dbReference type="CCDS" id="CCDS29048.1"/>
<dbReference type="RefSeq" id="NP_032084.2">
    <property type="nucleotide sequence ID" value="NM_008058.2"/>
</dbReference>
<dbReference type="PDB" id="1IJY">
    <property type="method" value="X-ray"/>
    <property type="resolution" value="1.35 A"/>
    <property type="chains" value="A/B=28-155"/>
</dbReference>
<dbReference type="PDB" id="4F0A">
    <property type="method" value="X-ray"/>
    <property type="resolution" value="3.25 A"/>
    <property type="chains" value="A=28-150"/>
</dbReference>
<dbReference type="PDB" id="6AHY">
    <property type="method" value="X-ray"/>
    <property type="resolution" value="2.80 A"/>
    <property type="chains" value="A/C/E=28-159"/>
</dbReference>
<dbReference type="PDB" id="6TFB">
    <property type="method" value="X-ray"/>
    <property type="resolution" value="1.68 A"/>
    <property type="chains" value="A/B=28-151"/>
</dbReference>
<dbReference type="PDB" id="6TFM">
    <property type="method" value="X-ray"/>
    <property type="resolution" value="2.34 A"/>
    <property type="chains" value="A/B/C/D=28-151"/>
</dbReference>
<dbReference type="PDB" id="8CTG">
    <property type="method" value="EM"/>
    <property type="resolution" value="3.80 A"/>
    <property type="chains" value="A=28-150"/>
</dbReference>
<dbReference type="PDBsum" id="1IJY"/>
<dbReference type="PDBsum" id="4F0A"/>
<dbReference type="PDBsum" id="6AHY"/>
<dbReference type="PDBsum" id="6TFB"/>
<dbReference type="PDBsum" id="6TFM"/>
<dbReference type="PDBsum" id="8CTG"/>
<dbReference type="EMDB" id="EMD-26989"/>
<dbReference type="SMR" id="Q61091"/>
<dbReference type="BioGRID" id="199781">
    <property type="interactions" value="4"/>
</dbReference>
<dbReference type="CORUM" id="Q61091"/>
<dbReference type="DIP" id="DIP-41258N"/>
<dbReference type="FunCoup" id="Q61091">
    <property type="interactions" value="509"/>
</dbReference>
<dbReference type="IntAct" id="Q61091">
    <property type="interactions" value="13"/>
</dbReference>
<dbReference type="MINT" id="Q61091"/>
<dbReference type="STRING" id="10090.ENSMUSP00000039660"/>
<dbReference type="BindingDB" id="Q61091"/>
<dbReference type="ChEMBL" id="CHEMBL4523332"/>
<dbReference type="DrugCentral" id="Q61091"/>
<dbReference type="GlyCosmos" id="Q61091">
    <property type="glycosylation" value="3 sites, No reported glycans"/>
</dbReference>
<dbReference type="GlyGen" id="Q61091">
    <property type="glycosylation" value="3 sites"/>
</dbReference>
<dbReference type="iPTMnet" id="Q61091"/>
<dbReference type="PhosphoSitePlus" id="Q61091"/>
<dbReference type="PaxDb" id="10090-ENSMUSP00000039660"/>
<dbReference type="ProteomicsDB" id="271621"/>
<dbReference type="Antibodypedia" id="13314">
    <property type="antibodies" value="342 antibodies from 41 providers"/>
</dbReference>
<dbReference type="DNASU" id="14370"/>
<dbReference type="Ensembl" id="ENSMUST00000041080.7">
    <property type="protein sequence ID" value="ENSMUSP00000039660.6"/>
    <property type="gene ID" value="ENSMUSG00000036904.7"/>
</dbReference>
<dbReference type="GeneID" id="14370"/>
<dbReference type="KEGG" id="mmu:14370"/>
<dbReference type="UCSC" id="uc008eag.2">
    <property type="organism name" value="mouse"/>
</dbReference>
<dbReference type="AGR" id="MGI:108460"/>
<dbReference type="CTD" id="8325"/>
<dbReference type="MGI" id="MGI:108460">
    <property type="gene designation" value="Fzd8"/>
</dbReference>
<dbReference type="VEuPathDB" id="HostDB:ENSMUSG00000036904"/>
<dbReference type="eggNOG" id="KOG3577">
    <property type="taxonomic scope" value="Eukaryota"/>
</dbReference>
<dbReference type="GeneTree" id="ENSGT00940000161191"/>
<dbReference type="HOGENOM" id="CLU_007873_2_0_1"/>
<dbReference type="InParanoid" id="Q61091"/>
<dbReference type="OMA" id="LPCHNPY"/>
<dbReference type="OrthoDB" id="10053709at2759"/>
<dbReference type="PhylomeDB" id="Q61091"/>
<dbReference type="TreeFam" id="TF317907"/>
<dbReference type="Reactome" id="R-MMU-4608870">
    <property type="pathway name" value="Asymmetric localization of PCP proteins"/>
</dbReference>
<dbReference type="Reactome" id="R-MMU-4641263">
    <property type="pathway name" value="Regulation of FZD by ubiquitination"/>
</dbReference>
<dbReference type="BioGRID-ORCS" id="14370">
    <property type="hits" value="1 hit in 78 CRISPR screens"/>
</dbReference>
<dbReference type="EvolutionaryTrace" id="Q61091"/>
<dbReference type="PRO" id="PR:Q61091"/>
<dbReference type="Proteomes" id="UP000000589">
    <property type="component" value="Chromosome 18"/>
</dbReference>
<dbReference type="RNAct" id="Q61091">
    <property type="molecule type" value="protein"/>
</dbReference>
<dbReference type="Bgee" id="ENSMUSG00000036904">
    <property type="expression patterns" value="Expressed in ventricular zone and 223 other cell types or tissues"/>
</dbReference>
<dbReference type="GO" id="GO:0005576">
    <property type="term" value="C:extracellular region"/>
    <property type="evidence" value="ECO:0000304"/>
    <property type="project" value="Reactome"/>
</dbReference>
<dbReference type="GO" id="GO:0005794">
    <property type="term" value="C:Golgi apparatus"/>
    <property type="evidence" value="ECO:0007669"/>
    <property type="project" value="UniProtKB-SubCell"/>
</dbReference>
<dbReference type="GO" id="GO:0098992">
    <property type="term" value="C:neuronal dense core vesicle"/>
    <property type="evidence" value="ECO:0000314"/>
    <property type="project" value="SynGO"/>
</dbReference>
<dbReference type="GO" id="GO:0005886">
    <property type="term" value="C:plasma membrane"/>
    <property type="evidence" value="ECO:0000314"/>
    <property type="project" value="BHF-UCL"/>
</dbReference>
<dbReference type="GO" id="GO:1990851">
    <property type="term" value="C:Wnt-Frizzled-LRP5/6 complex"/>
    <property type="evidence" value="ECO:0000314"/>
    <property type="project" value="ParkinsonsUK-UCL"/>
</dbReference>
<dbReference type="GO" id="GO:0004930">
    <property type="term" value="F:G protein-coupled receptor activity"/>
    <property type="evidence" value="ECO:0007669"/>
    <property type="project" value="UniProtKB-KW"/>
</dbReference>
<dbReference type="GO" id="GO:0030165">
    <property type="term" value="F:PDZ domain binding"/>
    <property type="evidence" value="ECO:0000353"/>
    <property type="project" value="BHF-UCL"/>
</dbReference>
<dbReference type="GO" id="GO:0005102">
    <property type="term" value="F:signaling receptor binding"/>
    <property type="evidence" value="ECO:0000353"/>
    <property type="project" value="BHF-UCL"/>
</dbReference>
<dbReference type="GO" id="GO:0031625">
    <property type="term" value="F:ubiquitin protein ligase binding"/>
    <property type="evidence" value="ECO:0007669"/>
    <property type="project" value="Ensembl"/>
</dbReference>
<dbReference type="GO" id="GO:0042813">
    <property type="term" value="F:Wnt receptor activity"/>
    <property type="evidence" value="ECO:0000353"/>
    <property type="project" value="MGI"/>
</dbReference>
<dbReference type="GO" id="GO:0017147">
    <property type="term" value="F:Wnt-protein binding"/>
    <property type="evidence" value="ECO:0000353"/>
    <property type="project" value="ParkinsonsUK-UCL"/>
</dbReference>
<dbReference type="GO" id="GO:0001525">
    <property type="term" value="P:angiogenesis"/>
    <property type="evidence" value="ECO:0000314"/>
    <property type="project" value="MGI"/>
</dbReference>
<dbReference type="GO" id="GO:0060070">
    <property type="term" value="P:canonical Wnt signaling pathway"/>
    <property type="evidence" value="ECO:0000314"/>
    <property type="project" value="MGI"/>
</dbReference>
<dbReference type="GO" id="GO:0033077">
    <property type="term" value="P:T cell differentiation in thymus"/>
    <property type="evidence" value="ECO:0000315"/>
    <property type="project" value="MGI"/>
</dbReference>
<dbReference type="GO" id="GO:0016055">
    <property type="term" value="P:Wnt signaling pathway"/>
    <property type="evidence" value="ECO:0000314"/>
    <property type="project" value="ParkinsonsUK-UCL"/>
</dbReference>
<dbReference type="CDD" id="cd15250">
    <property type="entry name" value="7tmF_FZD8"/>
    <property type="match status" value="1"/>
</dbReference>
<dbReference type="CDD" id="cd07461">
    <property type="entry name" value="CRD_FZ8"/>
    <property type="match status" value="1"/>
</dbReference>
<dbReference type="FunFam" id="1.10.2000.10:FF:000004">
    <property type="entry name" value="Frizzled class receptor 8a"/>
    <property type="match status" value="1"/>
</dbReference>
<dbReference type="Gene3D" id="1.10.2000.10">
    <property type="entry name" value="Frizzled cysteine-rich domain"/>
    <property type="match status" value="1"/>
</dbReference>
<dbReference type="Gene3D" id="1.20.1070.10">
    <property type="entry name" value="Rhodopsin 7-helix transmembrane proteins"/>
    <property type="match status" value="1"/>
</dbReference>
<dbReference type="InterPro" id="IPR015526">
    <property type="entry name" value="Frizzled/SFRP"/>
</dbReference>
<dbReference type="InterPro" id="IPR000539">
    <property type="entry name" value="Frizzled/Smoothened_7TM"/>
</dbReference>
<dbReference type="InterPro" id="IPR020067">
    <property type="entry name" value="Frizzled_dom"/>
</dbReference>
<dbReference type="InterPro" id="IPR036790">
    <property type="entry name" value="Frizzled_dom_sf"/>
</dbReference>
<dbReference type="InterPro" id="IPR041776">
    <property type="entry name" value="FZ8_CRD"/>
</dbReference>
<dbReference type="InterPro" id="IPR017981">
    <property type="entry name" value="GPCR_2-like_7TM"/>
</dbReference>
<dbReference type="PANTHER" id="PTHR11309">
    <property type="entry name" value="FRIZZLED"/>
    <property type="match status" value="1"/>
</dbReference>
<dbReference type="PANTHER" id="PTHR11309:SF90">
    <property type="entry name" value="FRIZZLED-8"/>
    <property type="match status" value="1"/>
</dbReference>
<dbReference type="Pfam" id="PF01534">
    <property type="entry name" value="Frizzled"/>
    <property type="match status" value="1"/>
</dbReference>
<dbReference type="Pfam" id="PF01392">
    <property type="entry name" value="Fz"/>
    <property type="match status" value="1"/>
</dbReference>
<dbReference type="PRINTS" id="PR00489">
    <property type="entry name" value="FRIZZLED"/>
</dbReference>
<dbReference type="SMART" id="SM00063">
    <property type="entry name" value="FRI"/>
    <property type="match status" value="1"/>
</dbReference>
<dbReference type="SMART" id="SM01330">
    <property type="entry name" value="Frizzled"/>
    <property type="match status" value="1"/>
</dbReference>
<dbReference type="SUPFAM" id="SSF63501">
    <property type="entry name" value="Frizzled cysteine-rich domain"/>
    <property type="match status" value="1"/>
</dbReference>
<dbReference type="PROSITE" id="PS50038">
    <property type="entry name" value="FZ"/>
    <property type="match status" value="1"/>
</dbReference>
<dbReference type="PROSITE" id="PS50261">
    <property type="entry name" value="G_PROTEIN_RECEP_F2_4"/>
    <property type="match status" value="1"/>
</dbReference>
<sequence>MEWGYLLEVTSLLAALAVLQRSSGAAAASAKELACQEITVPLCKGIGYNYTYMPNQFNHDTQDEAGLEVHQFWPLVEIQCSPDLKFFLCSMYTPICLEDYKKPLPPCRSVCERAKAGCAPLMRQYGFAWPDRMRCDRLPEQGNPDTLCMDYNRTDLTTAAPSPPRRLPPPPPPGEQPPSGSGHSRPPGARPPHRGGSSRGSGDAAAAPPSRGGKARPPGGGAAPCEPGCQCRAPMVSVSSERHPLYNRVKTGQIANCALPCHNPFFSQDERAFTVFWIGLWSVLCFVSTFATVSTFLIDMERFKYPERPIIFLSACYLFVSVGYLVRLVAGHEKVACSGGAPGAGGAGGAGGAAAAGAGAAGAGASSPGARGEYEELGAVEQHVRYETTGPALCTVVFLLVYFFGMASSIWWVILSLTWFLAAGMKWGNEAIAGYSQYFHLAAWLVPSVKSIAVLALSSVDGDPVAGICYVGNQSLDNLRGFVLAPLVIYLFIGTMFLLAGFVSLFRIRSVIKQQGGPTKTHKLEKLMIRLGLFTVLYTVPAAVVVACLFYEQHNRPRWEATHNCPCLRDLQPDQARRPDYAVFMLKYFMCLVVGITSGVWVWSGKTLESWRALCTRCCWASKGAAVGAGAGGSGPGGSGPGPGGGGGHGGGGGSLYSDVSTGLTWRSGTASSVSYPKQMPLSQV</sequence>
<proteinExistence type="evidence at protein level"/>
<keyword id="KW-0002">3D-structure</keyword>
<keyword id="KW-1003">Cell membrane</keyword>
<keyword id="KW-0217">Developmental protein</keyword>
<keyword id="KW-1015">Disulfide bond</keyword>
<keyword id="KW-0297">G-protein coupled receptor</keyword>
<keyword id="KW-0325">Glycoprotein</keyword>
<keyword id="KW-0333">Golgi apparatus</keyword>
<keyword id="KW-0472">Membrane</keyword>
<keyword id="KW-0675">Receptor</keyword>
<keyword id="KW-1185">Reference proteome</keyword>
<keyword id="KW-0732">Signal</keyword>
<keyword id="KW-0807">Transducer</keyword>
<keyword id="KW-0812">Transmembrane</keyword>
<keyword id="KW-1133">Transmembrane helix</keyword>
<keyword id="KW-0832">Ubl conjugation</keyword>
<keyword id="KW-0879">Wnt signaling pathway</keyword>
<gene>
    <name type="primary">Fzd8</name>
</gene>
<comment type="function">
    <text evidence="1 6 7 10 11">Receptor for Wnt proteins. Component of the Wnt-Fzd-LRP5-LRP6 complex that triggers beta-catenin signaling through inducing aggregation of receptor-ligand complexes into ribosome-sized signalosomes (By similarity). The beta-catenin canonical signaling pathway leads to the activation of disheveled proteins, inhibition of GSK-3 kinase, nuclear accumulation of beta-catenin and activation of Wnt target genes. A second signaling pathway involving PKC and calcium fluxes has been seen for some family members, but it is not yet clear if it represents a distinct pathway or if it can be integrated in the canonical pathway, as PKC seems to be required for Wnt-mediated inactivation of GSK-3 kinase. Both pathways seem to involve interactions with G-proteins. May be involved in transduction and intercellular transmission of polarity information during tissue morphogenesis and/or in differentiated tissues. Coreceptor along with RYK of Wnt proteins, such as WNT1.</text>
</comment>
<comment type="subunit">
    <text evidence="1 2 9 11 12">Component of a Wnt-signaling complex that contains a WNT protein, a FZD protein and LRP5 or LRP6. Interacts directly with LRP5 or LRP6; the interaction is promoted by Wnt-binding and signaling and inhibited by DKK1 (By similarity). Interacts (via the PDZ-binding motif) with GPOC (via its PDZ domain). Interacts with RSPO1 and RSPO3. Interacts with glypican GPC3 (By similarity).</text>
</comment>
<comment type="interaction">
    <interactant intactId="EBI-6171689">
        <id>Q61091</id>
    </interactant>
    <interactant intactId="EBI-296357">
        <id>Q8BH60</id>
        <label>Gopc</label>
    </interactant>
    <organismsDiffer>false</organismsDiffer>
    <experiments>3</experiments>
</comment>
<comment type="interaction">
    <interactant intactId="EBI-6171689">
        <id>Q61091</id>
    </interactant>
    <interactant intactId="EBI-15706768">
        <id>P47879</id>
        <label>Igfbp4</label>
    </interactant>
    <organismsDiffer>false</organismsDiffer>
    <experiments>3</experiments>
</comment>
<comment type="interaction">
    <interactant intactId="EBI-6171689">
        <id>Q61091</id>
    </interactant>
    <interactant intactId="EBI-2899665">
        <id>P27467</id>
        <label>Wnt3a</label>
    </interactant>
    <organismsDiffer>false</organismsDiffer>
    <experiments>7</experiments>
</comment>
<comment type="interaction">
    <interactant intactId="EBI-6171689">
        <id>Q61091</id>
    </interactant>
    <interactant intactId="EBI-910915">
        <id>O75581</id>
        <label>LRP6</label>
    </interactant>
    <organismsDiffer>true</organismsDiffer>
    <experiments>4</experiments>
</comment>
<comment type="interaction">
    <interactant intactId="EBI-6171689">
        <id>Q61091</id>
    </interactant>
    <interactant intactId="EBI-3644922">
        <id>P56703</id>
        <label>WNT3</label>
    </interactant>
    <organismsDiffer>true</organismsDiffer>
    <experiments>2</experiments>
</comment>
<comment type="interaction">
    <interactant intactId="EBI-6171689">
        <id>Q61091</id>
    </interactant>
    <interactant intactId="EBI-6257743">
        <id>P28026</id>
        <label>wnt8</label>
    </interactant>
    <organismsDiffer>true</organismsDiffer>
    <experiments>3</experiments>
</comment>
<comment type="subcellular location">
    <subcellularLocation>
        <location>Membrane</location>
        <topology>Multi-pass membrane protein</topology>
    </subcellularLocation>
    <subcellularLocation>
        <location>Golgi apparatus</location>
    </subcellularLocation>
    <subcellularLocation>
        <location>Cell membrane</location>
        <topology>Multi-pass membrane protein</topology>
    </subcellularLocation>
    <text>Colocalizes with GOPC at the Golgi apparatus.</text>
</comment>
<comment type="tissue specificity">
    <text>Expressed in chondrocytes.</text>
</comment>
<comment type="domain">
    <text evidence="1">Lys-Thr-X-X-X-Trp motif interacts with the PDZ domain of Dvl (Disheveled) family members and is involved in the activation of the Wnt/beta-catenin signaling pathway.</text>
</comment>
<comment type="domain">
    <text>The FZ domain is involved in binding with Wnt ligands.</text>
</comment>
<comment type="PTM">
    <text evidence="1">Ubiquitinated by ZNRF3, leading to its degradation by the proteasome.</text>
</comment>
<comment type="similarity">
    <text evidence="13">Belongs to the G-protein coupled receptor Fz/Smo family.</text>
</comment>
<protein>
    <recommendedName>
        <fullName>Frizzled-8</fullName>
        <shortName>Fz-8</shortName>
        <shortName>mFz8</shortName>
    </recommendedName>
</protein>
<feature type="signal peptide" evidence="3">
    <location>
        <begin position="1"/>
        <end position="27"/>
    </location>
</feature>
<feature type="chain" id="PRO_0000013001" description="Frizzled-8">
    <location>
        <begin position="28"/>
        <end position="685"/>
    </location>
</feature>
<feature type="topological domain" description="Extracellular" evidence="3">
    <location>
        <begin position="28"/>
        <end position="272"/>
    </location>
</feature>
<feature type="transmembrane region" description="Helical; Name=1" evidence="3">
    <location>
        <begin position="273"/>
        <end position="293"/>
    </location>
</feature>
<feature type="topological domain" description="Cytoplasmic" evidence="3">
    <location>
        <begin position="294"/>
        <end position="309"/>
    </location>
</feature>
<feature type="transmembrane region" description="Helical; Name=2" evidence="3">
    <location>
        <begin position="310"/>
        <end position="330"/>
    </location>
</feature>
<feature type="topological domain" description="Extracellular" evidence="3">
    <location>
        <begin position="331"/>
        <end position="394"/>
    </location>
</feature>
<feature type="transmembrane region" description="Helical; Name=3" evidence="3">
    <location>
        <begin position="395"/>
        <end position="415"/>
    </location>
</feature>
<feature type="topological domain" description="Cytoplasmic" evidence="3">
    <location>
        <begin position="416"/>
        <end position="437"/>
    </location>
</feature>
<feature type="transmembrane region" description="Helical; Name=4" evidence="3">
    <location>
        <begin position="438"/>
        <end position="458"/>
    </location>
</feature>
<feature type="topological domain" description="Extracellular" evidence="3">
    <location>
        <begin position="459"/>
        <end position="481"/>
    </location>
</feature>
<feature type="transmembrane region" description="Helical; Name=5" evidence="3">
    <location>
        <begin position="482"/>
        <end position="502"/>
    </location>
</feature>
<feature type="topological domain" description="Cytoplasmic" evidence="3">
    <location>
        <begin position="503"/>
        <end position="530"/>
    </location>
</feature>
<feature type="transmembrane region" description="Helical; Name=6" evidence="3">
    <location>
        <begin position="531"/>
        <end position="551"/>
    </location>
</feature>
<feature type="topological domain" description="Extracellular" evidence="3">
    <location>
        <begin position="552"/>
        <end position="582"/>
    </location>
</feature>
<feature type="transmembrane region" description="Helical; Name=7" evidence="3">
    <location>
        <begin position="583"/>
        <end position="603"/>
    </location>
</feature>
<feature type="topological domain" description="Cytoplasmic" evidence="3">
    <location>
        <begin position="604"/>
        <end position="685"/>
    </location>
</feature>
<feature type="domain" description="FZ" evidence="4">
    <location>
        <begin position="30"/>
        <end position="151"/>
    </location>
</feature>
<feature type="region of interest" description="Wnt-binding">
    <location>
        <begin position="95"/>
        <end position="100"/>
    </location>
</feature>
<feature type="region of interest" description="Wnt-binding">
    <location>
        <begin position="147"/>
        <end position="152"/>
    </location>
</feature>
<feature type="region of interest" description="Disordered" evidence="5">
    <location>
        <begin position="155"/>
        <end position="223"/>
    </location>
</feature>
<feature type="region of interest" description="Disordered" evidence="5">
    <location>
        <begin position="631"/>
        <end position="656"/>
    </location>
</feature>
<feature type="short sequence motif" description="Lys-Thr-X-X-X-Trp motif, mediates interaction with the PDZ domain of Dvl family members" evidence="1">
    <location>
        <begin position="606"/>
        <end position="611"/>
    </location>
</feature>
<feature type="short sequence motif" description="PDZ-binding">
    <location>
        <begin position="683"/>
        <end position="685"/>
    </location>
</feature>
<feature type="compositionally biased region" description="Pro residues" evidence="5">
    <location>
        <begin position="161"/>
        <end position="176"/>
    </location>
</feature>
<feature type="compositionally biased region" description="Low complexity" evidence="5">
    <location>
        <begin position="177"/>
        <end position="187"/>
    </location>
</feature>
<feature type="compositionally biased region" description="Low complexity" evidence="5">
    <location>
        <begin position="200"/>
        <end position="223"/>
    </location>
</feature>
<feature type="compositionally biased region" description="Gly residues" evidence="5">
    <location>
        <begin position="631"/>
        <end position="655"/>
    </location>
</feature>
<feature type="binding site">
    <location>
        <begin position="71"/>
        <end position="78"/>
    </location>
    <ligand>
        <name>hexadecanoate</name>
        <dbReference type="ChEBI" id="CHEBI:7896"/>
    </ligand>
</feature>
<feature type="glycosylation site" description="N-linked (GlcNAc...) asparagine" evidence="3">
    <location>
        <position position="49"/>
    </location>
</feature>
<feature type="glycosylation site" description="N-linked (GlcNAc...) asparagine" evidence="3">
    <location>
        <position position="152"/>
    </location>
</feature>
<feature type="glycosylation site" description="N-linked (GlcNAc...) asparagine" evidence="3">
    <location>
        <position position="473"/>
    </location>
</feature>
<feature type="disulfide bond" evidence="4 8">
    <location>
        <begin position="35"/>
        <end position="96"/>
    </location>
</feature>
<feature type="disulfide bond" evidence="4 8">
    <location>
        <begin position="43"/>
        <end position="89"/>
    </location>
</feature>
<feature type="disulfide bond" evidence="4 8">
    <location>
        <begin position="80"/>
        <end position="118"/>
    </location>
</feature>
<feature type="disulfide bond" evidence="4 8">
    <location>
        <begin position="107"/>
        <end position="148"/>
    </location>
</feature>
<feature type="disulfide bond" evidence="4 8">
    <location>
        <begin position="111"/>
        <end position="135"/>
    </location>
</feature>
<feature type="mutagenesis site" description="Reduces interaction with GOPC." evidence="9">
    <original>V</original>
    <variation>A</variation>
    <location>
        <position position="685"/>
    </location>
</feature>
<feature type="sequence conflict" description="In Ref. 1; AAC52433." evidence="13" ref="1">
    <original>A</original>
    <variation>R</variation>
    <location>
        <position position="347"/>
    </location>
</feature>
<feature type="sequence conflict" description="In Ref. 1; AAC52433." evidence="13" ref="1">
    <original>A</original>
    <variation>R</variation>
    <location>
        <position position="363"/>
    </location>
</feature>
<feature type="helix" evidence="14">
    <location>
        <begin position="41"/>
        <end position="43"/>
    </location>
</feature>
<feature type="strand" evidence="15">
    <location>
        <begin position="49"/>
        <end position="51"/>
    </location>
</feature>
<feature type="helix" evidence="14">
    <location>
        <begin position="62"/>
        <end position="69"/>
    </location>
</feature>
<feature type="helix" evidence="14">
    <location>
        <begin position="70"/>
        <end position="72"/>
    </location>
</feature>
<feature type="helix" evidence="14">
    <location>
        <begin position="73"/>
        <end position="78"/>
    </location>
</feature>
<feature type="helix" evidence="14">
    <location>
        <begin position="84"/>
        <end position="92"/>
    </location>
</feature>
<feature type="helix" evidence="14">
    <location>
        <begin position="108"/>
        <end position="124"/>
    </location>
</feature>
<feature type="helix" evidence="14">
    <location>
        <begin position="131"/>
        <end position="133"/>
    </location>
</feature>
<feature type="helix" evidence="14">
    <location>
        <begin position="135"/>
        <end position="137"/>
    </location>
</feature>
<feature type="strand" evidence="15">
    <location>
        <begin position="144"/>
        <end position="146"/>
    </location>
</feature>
<feature type="strand" evidence="16">
    <location>
        <begin position="149"/>
        <end position="151"/>
    </location>
</feature>
<organism>
    <name type="scientific">Mus musculus</name>
    <name type="common">Mouse</name>
    <dbReference type="NCBI Taxonomy" id="10090"/>
    <lineage>
        <taxon>Eukaryota</taxon>
        <taxon>Metazoa</taxon>
        <taxon>Chordata</taxon>
        <taxon>Craniata</taxon>
        <taxon>Vertebrata</taxon>
        <taxon>Euteleostomi</taxon>
        <taxon>Mammalia</taxon>
        <taxon>Eutheria</taxon>
        <taxon>Euarchontoglires</taxon>
        <taxon>Glires</taxon>
        <taxon>Rodentia</taxon>
        <taxon>Myomorpha</taxon>
        <taxon>Muroidea</taxon>
        <taxon>Muridae</taxon>
        <taxon>Murinae</taxon>
        <taxon>Mus</taxon>
        <taxon>Mus</taxon>
    </lineage>
</organism>